<feature type="chain" id="PRO_0000224266" description="Adenylosuccinate synthetase">
    <location>
        <begin position="1"/>
        <end position="427"/>
    </location>
</feature>
<feature type="active site" description="Proton acceptor" evidence="1">
    <location>
        <position position="13"/>
    </location>
</feature>
<feature type="active site" description="Proton donor" evidence="1">
    <location>
        <position position="41"/>
    </location>
</feature>
<feature type="binding site" evidence="1">
    <location>
        <begin position="12"/>
        <end position="18"/>
    </location>
    <ligand>
        <name>GTP</name>
        <dbReference type="ChEBI" id="CHEBI:37565"/>
    </ligand>
</feature>
<feature type="binding site" description="in other chain" evidence="1">
    <location>
        <begin position="13"/>
        <end position="16"/>
    </location>
    <ligand>
        <name>IMP</name>
        <dbReference type="ChEBI" id="CHEBI:58053"/>
        <note>ligand shared between dimeric partners</note>
    </ligand>
</feature>
<feature type="binding site" evidence="1">
    <location>
        <position position="13"/>
    </location>
    <ligand>
        <name>Mg(2+)</name>
        <dbReference type="ChEBI" id="CHEBI:18420"/>
    </ligand>
</feature>
<feature type="binding site" description="in other chain" evidence="1">
    <location>
        <begin position="38"/>
        <end position="41"/>
    </location>
    <ligand>
        <name>IMP</name>
        <dbReference type="ChEBI" id="CHEBI:58053"/>
        <note>ligand shared between dimeric partners</note>
    </ligand>
</feature>
<feature type="binding site" evidence="1">
    <location>
        <begin position="40"/>
        <end position="42"/>
    </location>
    <ligand>
        <name>GTP</name>
        <dbReference type="ChEBI" id="CHEBI:37565"/>
    </ligand>
</feature>
<feature type="binding site" evidence="1">
    <location>
        <position position="40"/>
    </location>
    <ligand>
        <name>Mg(2+)</name>
        <dbReference type="ChEBI" id="CHEBI:18420"/>
    </ligand>
</feature>
<feature type="binding site" description="in other chain" evidence="1">
    <location>
        <position position="128"/>
    </location>
    <ligand>
        <name>IMP</name>
        <dbReference type="ChEBI" id="CHEBI:58053"/>
        <note>ligand shared between dimeric partners</note>
    </ligand>
</feature>
<feature type="binding site" evidence="1">
    <location>
        <position position="142"/>
    </location>
    <ligand>
        <name>IMP</name>
        <dbReference type="ChEBI" id="CHEBI:58053"/>
        <note>ligand shared between dimeric partners</note>
    </ligand>
</feature>
<feature type="binding site" description="in other chain" evidence="1">
    <location>
        <position position="223"/>
    </location>
    <ligand>
        <name>IMP</name>
        <dbReference type="ChEBI" id="CHEBI:58053"/>
        <note>ligand shared between dimeric partners</note>
    </ligand>
</feature>
<feature type="binding site" description="in other chain" evidence="1">
    <location>
        <position position="238"/>
    </location>
    <ligand>
        <name>IMP</name>
        <dbReference type="ChEBI" id="CHEBI:58053"/>
        <note>ligand shared between dimeric partners</note>
    </ligand>
</feature>
<feature type="binding site" evidence="1">
    <location>
        <begin position="298"/>
        <end position="304"/>
    </location>
    <ligand>
        <name>substrate</name>
    </ligand>
</feature>
<feature type="binding site" description="in other chain" evidence="1">
    <location>
        <position position="302"/>
    </location>
    <ligand>
        <name>IMP</name>
        <dbReference type="ChEBI" id="CHEBI:58053"/>
        <note>ligand shared between dimeric partners</note>
    </ligand>
</feature>
<feature type="binding site" evidence="1">
    <location>
        <position position="304"/>
    </location>
    <ligand>
        <name>GTP</name>
        <dbReference type="ChEBI" id="CHEBI:37565"/>
    </ligand>
</feature>
<feature type="binding site" evidence="1">
    <location>
        <begin position="330"/>
        <end position="332"/>
    </location>
    <ligand>
        <name>GTP</name>
        <dbReference type="ChEBI" id="CHEBI:37565"/>
    </ligand>
</feature>
<feature type="binding site" evidence="1">
    <location>
        <begin position="412"/>
        <end position="414"/>
    </location>
    <ligand>
        <name>GTP</name>
        <dbReference type="ChEBI" id="CHEBI:37565"/>
    </ligand>
</feature>
<name>PURA_CARHZ</name>
<proteinExistence type="inferred from homology"/>
<sequence>MTTVVLIGTQWGDEGKGKITDFLAEKADLVVRYQGGNNAGHTVVVGENSFKLHLIPSGILYPEKICVIGNGVVIDPKVLKEELEYLRQRGVTTANLKISLRAHLIMPYHKKLDELEEEDKGENKIGTTKRGIGPAYRDKAARTGIRVCDLLDKELFAEKLALNLKEKNNLLEKIYGVEGFSYDELYHEYLEYAEIIRPYATDTSRLINDAIESGQKVLFEGAQGTLLDLDHGTYPYVTSSHPVAGAACIGAGIGPTKIHEVIGVVKAYTTRVGSGPFPTELLDETGEFLRKQGYEFGTTTGRPRRCGWFDGVIARYAARVNGLSGLAVTKLDVLTGLKTIKIAVGYRFNGKVINEFPASLKELSQCEPVYEELPGWSEDITGARKLTDLPENARNYLRKIEEITGVPIKIISVGTRRDQTIILDQVF</sequence>
<keyword id="KW-0963">Cytoplasm</keyword>
<keyword id="KW-0342">GTP-binding</keyword>
<keyword id="KW-0436">Ligase</keyword>
<keyword id="KW-0460">Magnesium</keyword>
<keyword id="KW-0479">Metal-binding</keyword>
<keyword id="KW-0547">Nucleotide-binding</keyword>
<keyword id="KW-0658">Purine biosynthesis</keyword>
<keyword id="KW-1185">Reference proteome</keyword>
<evidence type="ECO:0000255" key="1">
    <source>
        <dbReference type="HAMAP-Rule" id="MF_00011"/>
    </source>
</evidence>
<dbReference type="EC" id="6.3.4.4" evidence="1"/>
<dbReference type="EMBL" id="CP000141">
    <property type="protein sequence ID" value="ABB14742.1"/>
    <property type="molecule type" value="Genomic_DNA"/>
</dbReference>
<dbReference type="RefSeq" id="WP_011345530.1">
    <property type="nucleotide sequence ID" value="NC_007503.1"/>
</dbReference>
<dbReference type="SMR" id="Q3A8S5"/>
<dbReference type="FunCoup" id="Q3A8S5">
    <property type="interactions" value="449"/>
</dbReference>
<dbReference type="STRING" id="246194.CHY_2670"/>
<dbReference type="KEGG" id="chy:CHY_2670"/>
<dbReference type="eggNOG" id="COG0104">
    <property type="taxonomic scope" value="Bacteria"/>
</dbReference>
<dbReference type="HOGENOM" id="CLU_029848_0_0_9"/>
<dbReference type="InParanoid" id="Q3A8S5"/>
<dbReference type="OrthoDB" id="9807553at2"/>
<dbReference type="UniPathway" id="UPA00075">
    <property type="reaction ID" value="UER00335"/>
</dbReference>
<dbReference type="Proteomes" id="UP000002706">
    <property type="component" value="Chromosome"/>
</dbReference>
<dbReference type="GO" id="GO:0005737">
    <property type="term" value="C:cytoplasm"/>
    <property type="evidence" value="ECO:0007669"/>
    <property type="project" value="UniProtKB-SubCell"/>
</dbReference>
<dbReference type="GO" id="GO:0004019">
    <property type="term" value="F:adenylosuccinate synthase activity"/>
    <property type="evidence" value="ECO:0007669"/>
    <property type="project" value="UniProtKB-UniRule"/>
</dbReference>
<dbReference type="GO" id="GO:0005525">
    <property type="term" value="F:GTP binding"/>
    <property type="evidence" value="ECO:0007669"/>
    <property type="project" value="UniProtKB-UniRule"/>
</dbReference>
<dbReference type="GO" id="GO:0000287">
    <property type="term" value="F:magnesium ion binding"/>
    <property type="evidence" value="ECO:0007669"/>
    <property type="project" value="UniProtKB-UniRule"/>
</dbReference>
<dbReference type="GO" id="GO:0044208">
    <property type="term" value="P:'de novo' AMP biosynthetic process"/>
    <property type="evidence" value="ECO:0007669"/>
    <property type="project" value="UniProtKB-UniRule"/>
</dbReference>
<dbReference type="GO" id="GO:0046040">
    <property type="term" value="P:IMP metabolic process"/>
    <property type="evidence" value="ECO:0007669"/>
    <property type="project" value="TreeGrafter"/>
</dbReference>
<dbReference type="CDD" id="cd03108">
    <property type="entry name" value="AdSS"/>
    <property type="match status" value="1"/>
</dbReference>
<dbReference type="FunFam" id="1.10.300.10:FF:000001">
    <property type="entry name" value="Adenylosuccinate synthetase"/>
    <property type="match status" value="1"/>
</dbReference>
<dbReference type="FunFam" id="3.90.170.10:FF:000001">
    <property type="entry name" value="Adenylosuccinate synthetase"/>
    <property type="match status" value="1"/>
</dbReference>
<dbReference type="Gene3D" id="3.40.440.10">
    <property type="entry name" value="Adenylosuccinate Synthetase, subunit A, domain 1"/>
    <property type="match status" value="1"/>
</dbReference>
<dbReference type="Gene3D" id="1.10.300.10">
    <property type="entry name" value="Adenylosuccinate Synthetase, subunit A, domain 2"/>
    <property type="match status" value="1"/>
</dbReference>
<dbReference type="Gene3D" id="3.90.170.10">
    <property type="entry name" value="Adenylosuccinate Synthetase, subunit A, domain 3"/>
    <property type="match status" value="1"/>
</dbReference>
<dbReference type="HAMAP" id="MF_00011">
    <property type="entry name" value="Adenylosucc_synth"/>
    <property type="match status" value="1"/>
</dbReference>
<dbReference type="InterPro" id="IPR018220">
    <property type="entry name" value="Adenylosuccin_syn_GTP-bd"/>
</dbReference>
<dbReference type="InterPro" id="IPR033128">
    <property type="entry name" value="Adenylosuccin_syn_Lys_AS"/>
</dbReference>
<dbReference type="InterPro" id="IPR042109">
    <property type="entry name" value="Adenylosuccinate_synth_dom1"/>
</dbReference>
<dbReference type="InterPro" id="IPR042110">
    <property type="entry name" value="Adenylosuccinate_synth_dom2"/>
</dbReference>
<dbReference type="InterPro" id="IPR042111">
    <property type="entry name" value="Adenylosuccinate_synth_dom3"/>
</dbReference>
<dbReference type="InterPro" id="IPR001114">
    <property type="entry name" value="Adenylosuccinate_synthetase"/>
</dbReference>
<dbReference type="InterPro" id="IPR027417">
    <property type="entry name" value="P-loop_NTPase"/>
</dbReference>
<dbReference type="NCBIfam" id="NF002223">
    <property type="entry name" value="PRK01117.1"/>
    <property type="match status" value="1"/>
</dbReference>
<dbReference type="NCBIfam" id="TIGR00184">
    <property type="entry name" value="purA"/>
    <property type="match status" value="1"/>
</dbReference>
<dbReference type="PANTHER" id="PTHR11846">
    <property type="entry name" value="ADENYLOSUCCINATE SYNTHETASE"/>
    <property type="match status" value="1"/>
</dbReference>
<dbReference type="PANTHER" id="PTHR11846:SF0">
    <property type="entry name" value="ADENYLOSUCCINATE SYNTHETASE"/>
    <property type="match status" value="1"/>
</dbReference>
<dbReference type="Pfam" id="PF00709">
    <property type="entry name" value="Adenylsucc_synt"/>
    <property type="match status" value="1"/>
</dbReference>
<dbReference type="SMART" id="SM00788">
    <property type="entry name" value="Adenylsucc_synt"/>
    <property type="match status" value="1"/>
</dbReference>
<dbReference type="SUPFAM" id="SSF52540">
    <property type="entry name" value="P-loop containing nucleoside triphosphate hydrolases"/>
    <property type="match status" value="1"/>
</dbReference>
<dbReference type="PROSITE" id="PS01266">
    <property type="entry name" value="ADENYLOSUCCIN_SYN_1"/>
    <property type="match status" value="1"/>
</dbReference>
<dbReference type="PROSITE" id="PS00513">
    <property type="entry name" value="ADENYLOSUCCIN_SYN_2"/>
    <property type="match status" value="1"/>
</dbReference>
<comment type="function">
    <text evidence="1">Plays an important role in the de novo pathway of purine nucleotide biosynthesis. Catalyzes the first committed step in the biosynthesis of AMP from IMP.</text>
</comment>
<comment type="catalytic activity">
    <reaction evidence="1">
        <text>IMP + L-aspartate + GTP = N(6)-(1,2-dicarboxyethyl)-AMP + GDP + phosphate + 2 H(+)</text>
        <dbReference type="Rhea" id="RHEA:15753"/>
        <dbReference type="ChEBI" id="CHEBI:15378"/>
        <dbReference type="ChEBI" id="CHEBI:29991"/>
        <dbReference type="ChEBI" id="CHEBI:37565"/>
        <dbReference type="ChEBI" id="CHEBI:43474"/>
        <dbReference type="ChEBI" id="CHEBI:57567"/>
        <dbReference type="ChEBI" id="CHEBI:58053"/>
        <dbReference type="ChEBI" id="CHEBI:58189"/>
        <dbReference type="EC" id="6.3.4.4"/>
    </reaction>
</comment>
<comment type="cofactor">
    <cofactor evidence="1">
        <name>Mg(2+)</name>
        <dbReference type="ChEBI" id="CHEBI:18420"/>
    </cofactor>
    <text evidence="1">Binds 1 Mg(2+) ion per subunit.</text>
</comment>
<comment type="pathway">
    <text evidence="1">Purine metabolism; AMP biosynthesis via de novo pathway; AMP from IMP: step 1/2.</text>
</comment>
<comment type="subunit">
    <text evidence="1">Homodimer.</text>
</comment>
<comment type="subcellular location">
    <subcellularLocation>
        <location evidence="1">Cytoplasm</location>
    </subcellularLocation>
</comment>
<comment type="similarity">
    <text evidence="1">Belongs to the adenylosuccinate synthetase family.</text>
</comment>
<protein>
    <recommendedName>
        <fullName evidence="1">Adenylosuccinate synthetase</fullName>
        <shortName evidence="1">AMPSase</shortName>
        <shortName evidence="1">AdSS</shortName>
        <ecNumber evidence="1">6.3.4.4</ecNumber>
    </recommendedName>
    <alternativeName>
        <fullName evidence="1">IMP--aspartate ligase</fullName>
    </alternativeName>
</protein>
<organism>
    <name type="scientific">Carboxydothermus hydrogenoformans (strain ATCC BAA-161 / DSM 6008 / Z-2901)</name>
    <dbReference type="NCBI Taxonomy" id="246194"/>
    <lineage>
        <taxon>Bacteria</taxon>
        <taxon>Bacillati</taxon>
        <taxon>Bacillota</taxon>
        <taxon>Clostridia</taxon>
        <taxon>Thermoanaerobacterales</taxon>
        <taxon>Thermoanaerobacteraceae</taxon>
        <taxon>Carboxydothermus</taxon>
    </lineage>
</organism>
<accession>Q3A8S5</accession>
<reference key="1">
    <citation type="journal article" date="2005" name="PLoS Genet.">
        <title>Life in hot carbon monoxide: the complete genome sequence of Carboxydothermus hydrogenoformans Z-2901.</title>
        <authorList>
            <person name="Wu M."/>
            <person name="Ren Q."/>
            <person name="Durkin A.S."/>
            <person name="Daugherty S.C."/>
            <person name="Brinkac L.M."/>
            <person name="Dodson R.J."/>
            <person name="Madupu R."/>
            <person name="Sullivan S.A."/>
            <person name="Kolonay J.F."/>
            <person name="Nelson W.C."/>
            <person name="Tallon L.J."/>
            <person name="Jones K.M."/>
            <person name="Ulrich L.E."/>
            <person name="Gonzalez J.M."/>
            <person name="Zhulin I.B."/>
            <person name="Robb F.T."/>
            <person name="Eisen J.A."/>
        </authorList>
    </citation>
    <scope>NUCLEOTIDE SEQUENCE [LARGE SCALE GENOMIC DNA]</scope>
    <source>
        <strain>ATCC BAA-161 / DSM 6008 / Z-2901</strain>
    </source>
</reference>
<gene>
    <name evidence="1" type="primary">purA</name>
    <name type="ordered locus">CHY_2670</name>
</gene>